<accession>O13946</accession>
<name>TMEDA_SCHPO</name>
<comment type="function">
    <text evidence="1">Constituent of COPII-coated endoplasmic reticulum-derived transport vesicles. Required for efficient transport of a subset of secretory proteins to the Golgi. Facilitates retrograde transport from the Golgi to the endoplasmic reticulum (By similarity).</text>
</comment>
<comment type="subcellular location">
    <subcellularLocation>
        <location evidence="1">Endoplasmic reticulum membrane</location>
        <topology evidence="1">Single-pass type I membrane protein</topology>
    </subcellularLocation>
    <subcellularLocation>
        <location evidence="1">Golgi apparatus membrane</location>
        <topology evidence="1">Single-pass type I membrane protein</topology>
    </subcellularLocation>
    <text evidence="1">Recycles between endoplasmic reticulum and Golgi.</text>
</comment>
<comment type="similarity">
    <text evidence="3">Belongs to the EMP24/GP25L family.</text>
</comment>
<organism>
    <name type="scientific">Schizosaccharomyces pombe (strain 972 / ATCC 24843)</name>
    <name type="common">Fission yeast</name>
    <dbReference type="NCBI Taxonomy" id="284812"/>
    <lineage>
        <taxon>Eukaryota</taxon>
        <taxon>Fungi</taxon>
        <taxon>Dikarya</taxon>
        <taxon>Ascomycota</taxon>
        <taxon>Taphrinomycotina</taxon>
        <taxon>Schizosaccharomycetes</taxon>
        <taxon>Schizosaccharomycetales</taxon>
        <taxon>Schizosaccharomycetaceae</taxon>
        <taxon>Schizosaccharomyces</taxon>
    </lineage>
</organism>
<keyword id="KW-0256">Endoplasmic reticulum</keyword>
<keyword id="KW-0931">ER-Golgi transport</keyword>
<keyword id="KW-0333">Golgi apparatus</keyword>
<keyword id="KW-0472">Membrane</keyword>
<keyword id="KW-0653">Protein transport</keyword>
<keyword id="KW-1185">Reference proteome</keyword>
<keyword id="KW-0732">Signal</keyword>
<keyword id="KW-0812">Transmembrane</keyword>
<keyword id="KW-1133">Transmembrane helix</keyword>
<keyword id="KW-0813">Transport</keyword>
<protein>
    <recommendedName>
        <fullName>Endoplasmic reticulum vesicle protein 25</fullName>
    </recommendedName>
</protein>
<feature type="signal peptide" evidence="2">
    <location>
        <begin position="1"/>
        <end position="21"/>
    </location>
</feature>
<feature type="chain" id="PRO_0000237697" description="Endoplasmic reticulum vesicle protein 25">
    <location>
        <begin position="22"/>
        <end position="216"/>
    </location>
</feature>
<feature type="topological domain" description="Lumenal" evidence="2">
    <location>
        <begin position="22"/>
        <end position="184"/>
    </location>
</feature>
<feature type="transmembrane region" description="Helical" evidence="2">
    <location>
        <begin position="185"/>
        <end position="205"/>
    </location>
</feature>
<feature type="topological domain" description="Cytoplasmic">
    <location>
        <begin position="206"/>
        <end position="216"/>
    </location>
</feature>
<feature type="domain" description="GOLD">
    <location>
        <begin position="34"/>
        <end position="150"/>
    </location>
</feature>
<gene>
    <name type="primary">erv25</name>
    <name type="ORF">SPAC23H4.03c</name>
</gene>
<sequence length="216" mass="24485">MMVSLKSSLFFMLALLTVVHALNFDIPAKTNPEPFCLREYVGEKNLVIVNLKTTGNMGDGQTLSMMITDSSGNTHSSIQNVLGEKSVAFDVDASAMLDICFLNTLTPGAIESEHKKRSVKLEFTVGADADDYSSLQKANNLEPVEADIRRARDFIEEIKGKIYYLQAREARFRNTNESTNERVKNFAYLTFISLFVLVIWQILYLRSFFQRKHLIP</sequence>
<proteinExistence type="inferred from homology"/>
<evidence type="ECO:0000250" key="1"/>
<evidence type="ECO:0000255" key="2"/>
<evidence type="ECO:0000305" key="3"/>
<reference key="1">
    <citation type="journal article" date="2002" name="Nature">
        <title>The genome sequence of Schizosaccharomyces pombe.</title>
        <authorList>
            <person name="Wood V."/>
            <person name="Gwilliam R."/>
            <person name="Rajandream M.A."/>
            <person name="Lyne M.H."/>
            <person name="Lyne R."/>
            <person name="Stewart A."/>
            <person name="Sgouros J.G."/>
            <person name="Peat N."/>
            <person name="Hayles J."/>
            <person name="Baker S.G."/>
            <person name="Basham D."/>
            <person name="Bowman S."/>
            <person name="Brooks K."/>
            <person name="Brown D."/>
            <person name="Brown S."/>
            <person name="Chillingworth T."/>
            <person name="Churcher C.M."/>
            <person name="Collins M."/>
            <person name="Connor R."/>
            <person name="Cronin A."/>
            <person name="Davis P."/>
            <person name="Feltwell T."/>
            <person name="Fraser A."/>
            <person name="Gentles S."/>
            <person name="Goble A."/>
            <person name="Hamlin N."/>
            <person name="Harris D.E."/>
            <person name="Hidalgo J."/>
            <person name="Hodgson G."/>
            <person name="Holroyd S."/>
            <person name="Hornsby T."/>
            <person name="Howarth S."/>
            <person name="Huckle E.J."/>
            <person name="Hunt S."/>
            <person name="Jagels K."/>
            <person name="James K.D."/>
            <person name="Jones L."/>
            <person name="Jones M."/>
            <person name="Leather S."/>
            <person name="McDonald S."/>
            <person name="McLean J."/>
            <person name="Mooney P."/>
            <person name="Moule S."/>
            <person name="Mungall K.L."/>
            <person name="Murphy L.D."/>
            <person name="Niblett D."/>
            <person name="Odell C."/>
            <person name="Oliver K."/>
            <person name="O'Neil S."/>
            <person name="Pearson D."/>
            <person name="Quail M.A."/>
            <person name="Rabbinowitsch E."/>
            <person name="Rutherford K.M."/>
            <person name="Rutter S."/>
            <person name="Saunders D."/>
            <person name="Seeger K."/>
            <person name="Sharp S."/>
            <person name="Skelton J."/>
            <person name="Simmonds M.N."/>
            <person name="Squares R."/>
            <person name="Squares S."/>
            <person name="Stevens K."/>
            <person name="Taylor K."/>
            <person name="Taylor R.G."/>
            <person name="Tivey A."/>
            <person name="Walsh S.V."/>
            <person name="Warren T."/>
            <person name="Whitehead S."/>
            <person name="Woodward J.R."/>
            <person name="Volckaert G."/>
            <person name="Aert R."/>
            <person name="Robben J."/>
            <person name="Grymonprez B."/>
            <person name="Weltjens I."/>
            <person name="Vanstreels E."/>
            <person name="Rieger M."/>
            <person name="Schaefer M."/>
            <person name="Mueller-Auer S."/>
            <person name="Gabel C."/>
            <person name="Fuchs M."/>
            <person name="Duesterhoeft A."/>
            <person name="Fritzc C."/>
            <person name="Holzer E."/>
            <person name="Moestl D."/>
            <person name="Hilbert H."/>
            <person name="Borzym K."/>
            <person name="Langer I."/>
            <person name="Beck A."/>
            <person name="Lehrach H."/>
            <person name="Reinhardt R."/>
            <person name="Pohl T.M."/>
            <person name="Eger P."/>
            <person name="Zimmermann W."/>
            <person name="Wedler H."/>
            <person name="Wambutt R."/>
            <person name="Purnelle B."/>
            <person name="Goffeau A."/>
            <person name="Cadieu E."/>
            <person name="Dreano S."/>
            <person name="Gloux S."/>
            <person name="Lelaure V."/>
            <person name="Mottier S."/>
            <person name="Galibert F."/>
            <person name="Aves S.J."/>
            <person name="Xiang Z."/>
            <person name="Hunt C."/>
            <person name="Moore K."/>
            <person name="Hurst S.M."/>
            <person name="Lucas M."/>
            <person name="Rochet M."/>
            <person name="Gaillardin C."/>
            <person name="Tallada V.A."/>
            <person name="Garzon A."/>
            <person name="Thode G."/>
            <person name="Daga R.R."/>
            <person name="Cruzado L."/>
            <person name="Jimenez J."/>
            <person name="Sanchez M."/>
            <person name="del Rey F."/>
            <person name="Benito J."/>
            <person name="Dominguez A."/>
            <person name="Revuelta J.L."/>
            <person name="Moreno S."/>
            <person name="Armstrong J."/>
            <person name="Forsburg S.L."/>
            <person name="Cerutti L."/>
            <person name="Lowe T."/>
            <person name="McCombie W.R."/>
            <person name="Paulsen I."/>
            <person name="Potashkin J."/>
            <person name="Shpakovski G.V."/>
            <person name="Ussery D."/>
            <person name="Barrell B.G."/>
            <person name="Nurse P."/>
        </authorList>
    </citation>
    <scope>NUCLEOTIDE SEQUENCE [LARGE SCALE GENOMIC DNA]</scope>
    <source>
        <strain>972 / ATCC 24843</strain>
    </source>
</reference>
<dbReference type="EMBL" id="CU329670">
    <property type="protein sequence ID" value="CAB11658.1"/>
    <property type="molecule type" value="Genomic_DNA"/>
</dbReference>
<dbReference type="PIR" id="T38325">
    <property type="entry name" value="T38325"/>
</dbReference>
<dbReference type="RefSeq" id="NP_593403.1">
    <property type="nucleotide sequence ID" value="NM_001018835.2"/>
</dbReference>
<dbReference type="SMR" id="O13946"/>
<dbReference type="BioGRID" id="278275">
    <property type="interactions" value="1"/>
</dbReference>
<dbReference type="FunCoup" id="O13946">
    <property type="interactions" value="822"/>
</dbReference>
<dbReference type="STRING" id="284812.O13946"/>
<dbReference type="iPTMnet" id="O13946"/>
<dbReference type="PaxDb" id="4896-SPAC23H4.03c.1"/>
<dbReference type="EnsemblFungi" id="SPAC23H4.03c.1">
    <property type="protein sequence ID" value="SPAC23H4.03c.1:pep"/>
    <property type="gene ID" value="SPAC23H4.03c"/>
</dbReference>
<dbReference type="GeneID" id="2541782"/>
<dbReference type="KEGG" id="spo:2541782"/>
<dbReference type="PomBase" id="SPAC23H4.03c">
    <property type="gene designation" value="erv25"/>
</dbReference>
<dbReference type="VEuPathDB" id="FungiDB:SPAC23H4.03c"/>
<dbReference type="eggNOG" id="KOG1691">
    <property type="taxonomic scope" value="Eukaryota"/>
</dbReference>
<dbReference type="HOGENOM" id="CLU_066963_3_0_1"/>
<dbReference type="InParanoid" id="O13946"/>
<dbReference type="OMA" id="DVFEACF"/>
<dbReference type="PhylomeDB" id="O13946"/>
<dbReference type="Reactome" id="R-SPO-6807878">
    <property type="pathway name" value="COPI-mediated anterograde transport"/>
</dbReference>
<dbReference type="Reactome" id="R-SPO-6811434">
    <property type="pathway name" value="COPI-dependent Golgi-to-ER retrograde traffic"/>
</dbReference>
<dbReference type="PRO" id="PR:O13946"/>
<dbReference type="Proteomes" id="UP000002485">
    <property type="component" value="Chromosome I"/>
</dbReference>
<dbReference type="GO" id="GO:0030134">
    <property type="term" value="C:COPII-coated ER to Golgi transport vesicle"/>
    <property type="evidence" value="ECO:0000318"/>
    <property type="project" value="GO_Central"/>
</dbReference>
<dbReference type="GO" id="GO:0005783">
    <property type="term" value="C:endoplasmic reticulum"/>
    <property type="evidence" value="ECO:0007005"/>
    <property type="project" value="PomBase"/>
</dbReference>
<dbReference type="GO" id="GO:0005789">
    <property type="term" value="C:endoplasmic reticulum membrane"/>
    <property type="evidence" value="ECO:0007669"/>
    <property type="project" value="UniProtKB-SubCell"/>
</dbReference>
<dbReference type="GO" id="GO:0005793">
    <property type="term" value="C:endoplasmic reticulum-Golgi intermediate compartment"/>
    <property type="evidence" value="ECO:0000318"/>
    <property type="project" value="GO_Central"/>
</dbReference>
<dbReference type="GO" id="GO:0005794">
    <property type="term" value="C:Golgi apparatus"/>
    <property type="evidence" value="ECO:0000318"/>
    <property type="project" value="GO_Central"/>
</dbReference>
<dbReference type="GO" id="GO:0000139">
    <property type="term" value="C:Golgi membrane"/>
    <property type="evidence" value="ECO:0007669"/>
    <property type="project" value="UniProtKB-SubCell"/>
</dbReference>
<dbReference type="GO" id="GO:0006888">
    <property type="term" value="P:endoplasmic reticulum to Golgi vesicle-mediated transport"/>
    <property type="evidence" value="ECO:0000318"/>
    <property type="project" value="GO_Central"/>
</dbReference>
<dbReference type="GO" id="GO:0007030">
    <property type="term" value="P:Golgi organization"/>
    <property type="evidence" value="ECO:0000318"/>
    <property type="project" value="GO_Central"/>
</dbReference>
<dbReference type="GO" id="GO:0006886">
    <property type="term" value="P:intracellular protein transport"/>
    <property type="evidence" value="ECO:0000318"/>
    <property type="project" value="GO_Central"/>
</dbReference>
<dbReference type="InterPro" id="IPR015720">
    <property type="entry name" value="Emp24-like"/>
</dbReference>
<dbReference type="InterPro" id="IPR009038">
    <property type="entry name" value="GOLD_dom"/>
</dbReference>
<dbReference type="PANTHER" id="PTHR22811">
    <property type="entry name" value="TRANSMEMBRANE EMP24 DOMAIN-CONTAINING PROTEIN"/>
    <property type="match status" value="1"/>
</dbReference>
<dbReference type="Pfam" id="PF01105">
    <property type="entry name" value="EMP24_GP25L"/>
    <property type="match status" value="1"/>
</dbReference>
<dbReference type="SMART" id="SM01190">
    <property type="entry name" value="EMP24_GP25L"/>
    <property type="match status" value="1"/>
</dbReference>